<proteinExistence type="inferred from homology"/>
<protein>
    <recommendedName>
        <fullName evidence="1">Large ribosomal subunit protein bL20</fullName>
    </recommendedName>
    <alternativeName>
        <fullName evidence="3">50S ribosomal protein L20</fullName>
    </alternativeName>
</protein>
<evidence type="ECO:0000255" key="1">
    <source>
        <dbReference type="HAMAP-Rule" id="MF_00382"/>
    </source>
</evidence>
<evidence type="ECO:0000256" key="2">
    <source>
        <dbReference type="SAM" id="MobiDB-lite"/>
    </source>
</evidence>
<evidence type="ECO:0000305" key="3"/>
<organism>
    <name type="scientific">Mycobacterium ulcerans (strain Agy99)</name>
    <dbReference type="NCBI Taxonomy" id="362242"/>
    <lineage>
        <taxon>Bacteria</taxon>
        <taxon>Bacillati</taxon>
        <taxon>Actinomycetota</taxon>
        <taxon>Actinomycetes</taxon>
        <taxon>Mycobacteriales</taxon>
        <taxon>Mycobacteriaceae</taxon>
        <taxon>Mycobacterium</taxon>
        <taxon>Mycobacterium ulcerans group</taxon>
    </lineage>
</organism>
<sequence>MARVKRSVNAHKKRRSVLKASKGYRGQRSRLYRKAKEQQLHSLNYAYRDRRARKGEFRKLWISRINAAARANDITYNRLIQGLKAAGVEVDRKNLADIAITDPAAFTALVDVARAALPEDVSAPSGEAA</sequence>
<reference key="1">
    <citation type="journal article" date="2007" name="Genome Res.">
        <title>Reductive evolution and niche adaptation inferred from the genome of Mycobacterium ulcerans, the causative agent of Buruli ulcer.</title>
        <authorList>
            <person name="Stinear T.P."/>
            <person name="Seemann T."/>
            <person name="Pidot S."/>
            <person name="Frigui W."/>
            <person name="Reysset G."/>
            <person name="Garnier T."/>
            <person name="Meurice G."/>
            <person name="Simon D."/>
            <person name="Bouchier C."/>
            <person name="Ma L."/>
            <person name="Tichit M."/>
            <person name="Porter J.L."/>
            <person name="Ryan J."/>
            <person name="Johnson P.D.R."/>
            <person name="Davies J.K."/>
            <person name="Jenkin G.A."/>
            <person name="Small P.L.C."/>
            <person name="Jones L.M."/>
            <person name="Tekaia F."/>
            <person name="Laval F."/>
            <person name="Daffe M."/>
            <person name="Parkhill J."/>
            <person name="Cole S.T."/>
        </authorList>
    </citation>
    <scope>NUCLEOTIDE SEQUENCE [LARGE SCALE GENOMIC DNA]</scope>
    <source>
        <strain>Agy99</strain>
    </source>
</reference>
<keyword id="KW-0687">Ribonucleoprotein</keyword>
<keyword id="KW-0689">Ribosomal protein</keyword>
<keyword id="KW-0694">RNA-binding</keyword>
<keyword id="KW-0699">rRNA-binding</keyword>
<accession>A0PP60</accession>
<gene>
    <name evidence="1" type="primary">rplT</name>
    <name type="ordered locus">MUL_1629</name>
</gene>
<dbReference type="EMBL" id="CP000325">
    <property type="protein sequence ID" value="ABL04129.1"/>
    <property type="molecule type" value="Genomic_DNA"/>
</dbReference>
<dbReference type="RefSeq" id="WP_011739749.1">
    <property type="nucleotide sequence ID" value="NC_008611.1"/>
</dbReference>
<dbReference type="SMR" id="A0PP60"/>
<dbReference type="KEGG" id="mul:MUL_1629"/>
<dbReference type="eggNOG" id="COG0292">
    <property type="taxonomic scope" value="Bacteria"/>
</dbReference>
<dbReference type="HOGENOM" id="CLU_123265_0_0_11"/>
<dbReference type="Proteomes" id="UP000000765">
    <property type="component" value="Chromosome"/>
</dbReference>
<dbReference type="GO" id="GO:1990904">
    <property type="term" value="C:ribonucleoprotein complex"/>
    <property type="evidence" value="ECO:0007669"/>
    <property type="project" value="UniProtKB-KW"/>
</dbReference>
<dbReference type="GO" id="GO:0005840">
    <property type="term" value="C:ribosome"/>
    <property type="evidence" value="ECO:0007669"/>
    <property type="project" value="UniProtKB-KW"/>
</dbReference>
<dbReference type="GO" id="GO:0019843">
    <property type="term" value="F:rRNA binding"/>
    <property type="evidence" value="ECO:0007669"/>
    <property type="project" value="UniProtKB-UniRule"/>
</dbReference>
<dbReference type="GO" id="GO:0003735">
    <property type="term" value="F:structural constituent of ribosome"/>
    <property type="evidence" value="ECO:0007669"/>
    <property type="project" value="InterPro"/>
</dbReference>
<dbReference type="GO" id="GO:0000027">
    <property type="term" value="P:ribosomal large subunit assembly"/>
    <property type="evidence" value="ECO:0007669"/>
    <property type="project" value="UniProtKB-UniRule"/>
</dbReference>
<dbReference type="GO" id="GO:0006412">
    <property type="term" value="P:translation"/>
    <property type="evidence" value="ECO:0007669"/>
    <property type="project" value="InterPro"/>
</dbReference>
<dbReference type="CDD" id="cd07026">
    <property type="entry name" value="Ribosomal_L20"/>
    <property type="match status" value="1"/>
</dbReference>
<dbReference type="FunFam" id="1.10.1900.20:FF:000001">
    <property type="entry name" value="50S ribosomal protein L20"/>
    <property type="match status" value="1"/>
</dbReference>
<dbReference type="Gene3D" id="6.10.160.10">
    <property type="match status" value="1"/>
</dbReference>
<dbReference type="Gene3D" id="1.10.1900.20">
    <property type="entry name" value="Ribosomal protein L20"/>
    <property type="match status" value="1"/>
</dbReference>
<dbReference type="HAMAP" id="MF_00382">
    <property type="entry name" value="Ribosomal_bL20"/>
    <property type="match status" value="1"/>
</dbReference>
<dbReference type="InterPro" id="IPR005813">
    <property type="entry name" value="Ribosomal_bL20"/>
</dbReference>
<dbReference type="InterPro" id="IPR049946">
    <property type="entry name" value="RIBOSOMAL_L20_CS"/>
</dbReference>
<dbReference type="InterPro" id="IPR035566">
    <property type="entry name" value="Ribosomal_protein_bL20_C"/>
</dbReference>
<dbReference type="NCBIfam" id="TIGR01032">
    <property type="entry name" value="rplT_bact"/>
    <property type="match status" value="1"/>
</dbReference>
<dbReference type="PANTHER" id="PTHR10986">
    <property type="entry name" value="39S RIBOSOMAL PROTEIN L20"/>
    <property type="match status" value="1"/>
</dbReference>
<dbReference type="Pfam" id="PF00453">
    <property type="entry name" value="Ribosomal_L20"/>
    <property type="match status" value="1"/>
</dbReference>
<dbReference type="PRINTS" id="PR00062">
    <property type="entry name" value="RIBOSOMALL20"/>
</dbReference>
<dbReference type="SUPFAM" id="SSF74731">
    <property type="entry name" value="Ribosomal protein L20"/>
    <property type="match status" value="1"/>
</dbReference>
<dbReference type="PROSITE" id="PS00937">
    <property type="entry name" value="RIBOSOMAL_L20"/>
    <property type="match status" value="1"/>
</dbReference>
<feature type="chain" id="PRO_1000049017" description="Large ribosomal subunit protein bL20">
    <location>
        <begin position="1"/>
        <end position="129"/>
    </location>
</feature>
<feature type="region of interest" description="Disordered" evidence="2">
    <location>
        <begin position="1"/>
        <end position="29"/>
    </location>
</feature>
<feature type="compositionally biased region" description="Basic residues" evidence="2">
    <location>
        <begin position="1"/>
        <end position="17"/>
    </location>
</feature>
<name>RL20_MYCUA</name>
<comment type="function">
    <text evidence="1">Binds directly to 23S ribosomal RNA and is necessary for the in vitro assembly process of the 50S ribosomal subunit. It is not involved in the protein synthesizing functions of that subunit.</text>
</comment>
<comment type="similarity">
    <text evidence="1">Belongs to the bacterial ribosomal protein bL20 family.</text>
</comment>